<comment type="function">
    <text evidence="1">Transcriptional repressor that controls expression of the genes required for the catabolism of sialic acids.</text>
</comment>
<comment type="similarity">
    <text evidence="1">Belongs to the NanR family.</text>
</comment>
<evidence type="ECO:0000255" key="1">
    <source>
        <dbReference type="HAMAP-Rule" id="MF_01236"/>
    </source>
</evidence>
<evidence type="ECO:0000256" key="2">
    <source>
        <dbReference type="SAM" id="MobiDB-lite"/>
    </source>
</evidence>
<sequence>MGLMNAFDSQTEDSSPAIGRNLRSRPLARKKLSEMVEEELEQMIRRREFGEGEQLPSERELMAFFNVGRPSVREALAALKRKGLVQINNGERARVSRPSADTIIGELSGMAKDFLSHPGGIAHFEQLRLFFESSLVRYAAEHATDEQIDLLAKALEINSQSLDNNAAFIRSDVDFHRVLAEIPGNPIFMAIHVALLDWLIAARPTVTDQALHEHNNVSYQQHIAIVDAIRRHDPDEADRALQSHLNSVSATWYAFGQTTNKKK</sequence>
<feature type="chain" id="PRO_0000301528" description="HTH-type transcriptional repressor NanR">
    <location>
        <begin position="1"/>
        <end position="263"/>
    </location>
</feature>
<feature type="domain" description="HTH gntR-type" evidence="1">
    <location>
        <begin position="30"/>
        <end position="98"/>
    </location>
</feature>
<feature type="DNA-binding region" description="H-T-H motif" evidence="1">
    <location>
        <begin position="58"/>
        <end position="77"/>
    </location>
</feature>
<feature type="region of interest" description="Disordered" evidence="2">
    <location>
        <begin position="1"/>
        <end position="22"/>
    </location>
</feature>
<accession>Q32BB3</accession>
<reference key="1">
    <citation type="journal article" date="2005" name="Nucleic Acids Res.">
        <title>Genome dynamics and diversity of Shigella species, the etiologic agents of bacillary dysentery.</title>
        <authorList>
            <person name="Yang F."/>
            <person name="Yang J."/>
            <person name="Zhang X."/>
            <person name="Chen L."/>
            <person name="Jiang Y."/>
            <person name="Yan Y."/>
            <person name="Tang X."/>
            <person name="Wang J."/>
            <person name="Xiong Z."/>
            <person name="Dong J."/>
            <person name="Xue Y."/>
            <person name="Zhu Y."/>
            <person name="Xu X."/>
            <person name="Sun L."/>
            <person name="Chen S."/>
            <person name="Nie H."/>
            <person name="Peng J."/>
            <person name="Xu J."/>
            <person name="Wang Y."/>
            <person name="Yuan Z."/>
            <person name="Wen Y."/>
            <person name="Yao Z."/>
            <person name="Shen Y."/>
            <person name="Qiang B."/>
            <person name="Hou Y."/>
            <person name="Yu J."/>
            <person name="Jin Q."/>
        </authorList>
    </citation>
    <scope>NUCLEOTIDE SEQUENCE [LARGE SCALE GENOMIC DNA]</scope>
    <source>
        <strain>Sd197</strain>
    </source>
</reference>
<protein>
    <recommendedName>
        <fullName evidence="1">HTH-type transcriptional repressor NanR</fullName>
    </recommendedName>
</protein>
<organism>
    <name type="scientific">Shigella dysenteriae serotype 1 (strain Sd197)</name>
    <dbReference type="NCBI Taxonomy" id="300267"/>
    <lineage>
        <taxon>Bacteria</taxon>
        <taxon>Pseudomonadati</taxon>
        <taxon>Pseudomonadota</taxon>
        <taxon>Gammaproteobacteria</taxon>
        <taxon>Enterobacterales</taxon>
        <taxon>Enterobacteriaceae</taxon>
        <taxon>Shigella</taxon>
    </lineage>
</organism>
<keyword id="KW-0238">DNA-binding</keyword>
<keyword id="KW-1185">Reference proteome</keyword>
<keyword id="KW-0678">Repressor</keyword>
<keyword id="KW-0804">Transcription</keyword>
<keyword id="KW-0805">Transcription regulation</keyword>
<proteinExistence type="inferred from homology"/>
<name>NANR_SHIDS</name>
<gene>
    <name evidence="1" type="primary">nanR</name>
    <name type="ordered locus">SDY_3401</name>
</gene>
<dbReference type="EMBL" id="CP000034">
    <property type="protein sequence ID" value="ABB63392.1"/>
    <property type="molecule type" value="Genomic_DNA"/>
</dbReference>
<dbReference type="RefSeq" id="WP_000523846.1">
    <property type="nucleotide sequence ID" value="NC_007606.1"/>
</dbReference>
<dbReference type="RefSeq" id="YP_404883.1">
    <property type="nucleotide sequence ID" value="NC_007606.1"/>
</dbReference>
<dbReference type="SMR" id="Q32BB3"/>
<dbReference type="STRING" id="300267.SDY_3401"/>
<dbReference type="EnsemblBacteria" id="ABB63392">
    <property type="protein sequence ID" value="ABB63392"/>
    <property type="gene ID" value="SDY_3401"/>
</dbReference>
<dbReference type="KEGG" id="sdy:SDY_3401"/>
<dbReference type="PATRIC" id="fig|300267.13.peg.4057"/>
<dbReference type="HOGENOM" id="CLU_017584_9_1_6"/>
<dbReference type="Proteomes" id="UP000002716">
    <property type="component" value="Chromosome"/>
</dbReference>
<dbReference type="GO" id="GO:0003677">
    <property type="term" value="F:DNA binding"/>
    <property type="evidence" value="ECO:0007669"/>
    <property type="project" value="UniProtKB-KW"/>
</dbReference>
<dbReference type="GO" id="GO:0003700">
    <property type="term" value="F:DNA-binding transcription factor activity"/>
    <property type="evidence" value="ECO:0007669"/>
    <property type="project" value="UniProtKB-UniRule"/>
</dbReference>
<dbReference type="GO" id="GO:0045892">
    <property type="term" value="P:negative regulation of DNA-templated transcription"/>
    <property type="evidence" value="ECO:0007669"/>
    <property type="project" value="UniProtKB-UniRule"/>
</dbReference>
<dbReference type="CDD" id="cd07377">
    <property type="entry name" value="WHTH_GntR"/>
    <property type="match status" value="1"/>
</dbReference>
<dbReference type="FunFam" id="1.10.10.10:FF:000150">
    <property type="entry name" value="HTH-type transcriptional repressor NanR"/>
    <property type="match status" value="1"/>
</dbReference>
<dbReference type="FunFam" id="1.20.120.530:FF:000006">
    <property type="entry name" value="HTH-type transcriptional repressor NanR"/>
    <property type="match status" value="1"/>
</dbReference>
<dbReference type="Gene3D" id="1.20.120.530">
    <property type="entry name" value="GntR ligand-binding domain-like"/>
    <property type="match status" value="1"/>
</dbReference>
<dbReference type="Gene3D" id="1.10.10.10">
    <property type="entry name" value="Winged helix-like DNA-binding domain superfamily/Winged helix DNA-binding domain"/>
    <property type="match status" value="1"/>
</dbReference>
<dbReference type="HAMAP" id="MF_01236">
    <property type="entry name" value="HTH_NanR"/>
    <property type="match status" value="1"/>
</dbReference>
<dbReference type="InterPro" id="IPR011711">
    <property type="entry name" value="GntR_C"/>
</dbReference>
<dbReference type="InterPro" id="IPR008920">
    <property type="entry name" value="TF_FadR/GntR_C"/>
</dbReference>
<dbReference type="InterPro" id="IPR000524">
    <property type="entry name" value="Tscrpt_reg_HTH_GntR"/>
</dbReference>
<dbReference type="InterPro" id="IPR023730">
    <property type="entry name" value="Tscrpt_reg_NanR"/>
</dbReference>
<dbReference type="InterPro" id="IPR036388">
    <property type="entry name" value="WH-like_DNA-bd_sf"/>
</dbReference>
<dbReference type="InterPro" id="IPR036390">
    <property type="entry name" value="WH_DNA-bd_sf"/>
</dbReference>
<dbReference type="NCBIfam" id="NF003011">
    <property type="entry name" value="PRK03837.1"/>
    <property type="match status" value="1"/>
</dbReference>
<dbReference type="PANTHER" id="PTHR43537:SF53">
    <property type="entry name" value="HTH-TYPE TRANSCRIPTIONAL REPRESSOR NANR"/>
    <property type="match status" value="1"/>
</dbReference>
<dbReference type="PANTHER" id="PTHR43537">
    <property type="entry name" value="TRANSCRIPTIONAL REGULATOR, GNTR FAMILY"/>
    <property type="match status" value="1"/>
</dbReference>
<dbReference type="Pfam" id="PF07729">
    <property type="entry name" value="FCD"/>
    <property type="match status" value="1"/>
</dbReference>
<dbReference type="Pfam" id="PF00392">
    <property type="entry name" value="GntR"/>
    <property type="match status" value="1"/>
</dbReference>
<dbReference type="PRINTS" id="PR00035">
    <property type="entry name" value="HTHGNTR"/>
</dbReference>
<dbReference type="SMART" id="SM00895">
    <property type="entry name" value="FCD"/>
    <property type="match status" value="1"/>
</dbReference>
<dbReference type="SMART" id="SM00345">
    <property type="entry name" value="HTH_GNTR"/>
    <property type="match status" value="1"/>
</dbReference>
<dbReference type="SUPFAM" id="SSF48008">
    <property type="entry name" value="GntR ligand-binding domain-like"/>
    <property type="match status" value="1"/>
</dbReference>
<dbReference type="SUPFAM" id="SSF46785">
    <property type="entry name" value="Winged helix' DNA-binding domain"/>
    <property type="match status" value="1"/>
</dbReference>
<dbReference type="PROSITE" id="PS50949">
    <property type="entry name" value="HTH_GNTR"/>
    <property type="match status" value="1"/>
</dbReference>